<evidence type="ECO:0000255" key="1">
    <source>
        <dbReference type="HAMAP-Rule" id="MF_00451"/>
    </source>
</evidence>
<sequence length="143" mass="15454">MALQRTFSIIKPDAVAKNVIGEITTRFEKAGLRVVASKMVQLSEREAAGFYAEHSERGFFKDLVAFMTSGPVIVQVLEGENAVAKNRELMGATNPKEAAPGTIRADFAVSIDENAVHGSDSEASAAREIAYFFAATEVCARIR</sequence>
<accession>A4VNX5</accession>
<dbReference type="EC" id="2.7.4.6" evidence="1"/>
<dbReference type="EMBL" id="CP000304">
    <property type="protein sequence ID" value="ABP80676.1"/>
    <property type="molecule type" value="Genomic_DNA"/>
</dbReference>
<dbReference type="RefSeq" id="WP_011914130.1">
    <property type="nucleotide sequence ID" value="NC_009434.1"/>
</dbReference>
<dbReference type="SMR" id="A4VNX5"/>
<dbReference type="GeneID" id="66822421"/>
<dbReference type="KEGG" id="psa:PST_3035"/>
<dbReference type="eggNOG" id="COG0105">
    <property type="taxonomic scope" value="Bacteria"/>
</dbReference>
<dbReference type="HOGENOM" id="CLU_060216_8_1_6"/>
<dbReference type="Proteomes" id="UP000000233">
    <property type="component" value="Chromosome"/>
</dbReference>
<dbReference type="GO" id="GO:0005737">
    <property type="term" value="C:cytoplasm"/>
    <property type="evidence" value="ECO:0007669"/>
    <property type="project" value="UniProtKB-SubCell"/>
</dbReference>
<dbReference type="GO" id="GO:0005524">
    <property type="term" value="F:ATP binding"/>
    <property type="evidence" value="ECO:0007669"/>
    <property type="project" value="UniProtKB-UniRule"/>
</dbReference>
<dbReference type="GO" id="GO:0046872">
    <property type="term" value="F:metal ion binding"/>
    <property type="evidence" value="ECO:0007669"/>
    <property type="project" value="UniProtKB-KW"/>
</dbReference>
<dbReference type="GO" id="GO:0004550">
    <property type="term" value="F:nucleoside diphosphate kinase activity"/>
    <property type="evidence" value="ECO:0007669"/>
    <property type="project" value="UniProtKB-UniRule"/>
</dbReference>
<dbReference type="GO" id="GO:0006241">
    <property type="term" value="P:CTP biosynthetic process"/>
    <property type="evidence" value="ECO:0007669"/>
    <property type="project" value="UniProtKB-UniRule"/>
</dbReference>
<dbReference type="GO" id="GO:0006183">
    <property type="term" value="P:GTP biosynthetic process"/>
    <property type="evidence" value="ECO:0007669"/>
    <property type="project" value="UniProtKB-UniRule"/>
</dbReference>
<dbReference type="GO" id="GO:0006228">
    <property type="term" value="P:UTP biosynthetic process"/>
    <property type="evidence" value="ECO:0007669"/>
    <property type="project" value="UniProtKB-UniRule"/>
</dbReference>
<dbReference type="CDD" id="cd04413">
    <property type="entry name" value="NDPk_I"/>
    <property type="match status" value="1"/>
</dbReference>
<dbReference type="FunFam" id="3.30.70.141:FF:000001">
    <property type="entry name" value="Nucleoside diphosphate kinase"/>
    <property type="match status" value="1"/>
</dbReference>
<dbReference type="Gene3D" id="3.30.70.141">
    <property type="entry name" value="Nucleoside diphosphate kinase-like domain"/>
    <property type="match status" value="1"/>
</dbReference>
<dbReference type="HAMAP" id="MF_00451">
    <property type="entry name" value="NDP_kinase"/>
    <property type="match status" value="1"/>
</dbReference>
<dbReference type="InterPro" id="IPR034907">
    <property type="entry name" value="NDK-like_dom"/>
</dbReference>
<dbReference type="InterPro" id="IPR036850">
    <property type="entry name" value="NDK-like_dom_sf"/>
</dbReference>
<dbReference type="InterPro" id="IPR001564">
    <property type="entry name" value="Nucleoside_diP_kinase"/>
</dbReference>
<dbReference type="InterPro" id="IPR023005">
    <property type="entry name" value="Nucleoside_diP_kinase_AS"/>
</dbReference>
<dbReference type="NCBIfam" id="NF001908">
    <property type="entry name" value="PRK00668.1"/>
    <property type="match status" value="1"/>
</dbReference>
<dbReference type="PANTHER" id="PTHR46161">
    <property type="entry name" value="NUCLEOSIDE DIPHOSPHATE KINASE"/>
    <property type="match status" value="1"/>
</dbReference>
<dbReference type="PANTHER" id="PTHR46161:SF3">
    <property type="entry name" value="NUCLEOSIDE DIPHOSPHATE KINASE DDB_G0292928-RELATED"/>
    <property type="match status" value="1"/>
</dbReference>
<dbReference type="Pfam" id="PF00334">
    <property type="entry name" value="NDK"/>
    <property type="match status" value="1"/>
</dbReference>
<dbReference type="PRINTS" id="PR01243">
    <property type="entry name" value="NUCDPKINASE"/>
</dbReference>
<dbReference type="SMART" id="SM00562">
    <property type="entry name" value="NDK"/>
    <property type="match status" value="1"/>
</dbReference>
<dbReference type="SUPFAM" id="SSF54919">
    <property type="entry name" value="Nucleoside diphosphate kinase, NDK"/>
    <property type="match status" value="1"/>
</dbReference>
<dbReference type="PROSITE" id="PS00469">
    <property type="entry name" value="NDPK"/>
    <property type="match status" value="1"/>
</dbReference>
<dbReference type="PROSITE" id="PS51374">
    <property type="entry name" value="NDPK_LIKE"/>
    <property type="match status" value="1"/>
</dbReference>
<keyword id="KW-0067">ATP-binding</keyword>
<keyword id="KW-0963">Cytoplasm</keyword>
<keyword id="KW-0418">Kinase</keyword>
<keyword id="KW-0460">Magnesium</keyword>
<keyword id="KW-0479">Metal-binding</keyword>
<keyword id="KW-0546">Nucleotide metabolism</keyword>
<keyword id="KW-0547">Nucleotide-binding</keyword>
<keyword id="KW-0597">Phosphoprotein</keyword>
<keyword id="KW-1185">Reference proteome</keyword>
<keyword id="KW-0808">Transferase</keyword>
<name>NDK_STUS1</name>
<protein>
    <recommendedName>
        <fullName evidence="1">Nucleoside diphosphate kinase</fullName>
        <shortName evidence="1">NDK</shortName>
        <shortName evidence="1">NDP kinase</shortName>
        <ecNumber evidence="1">2.7.4.6</ecNumber>
    </recommendedName>
    <alternativeName>
        <fullName evidence="1">Nucleoside-2-P kinase</fullName>
    </alternativeName>
</protein>
<feature type="chain" id="PRO_1000026279" description="Nucleoside diphosphate kinase">
    <location>
        <begin position="1"/>
        <end position="143"/>
    </location>
</feature>
<feature type="active site" description="Pros-phosphohistidine intermediate" evidence="1">
    <location>
        <position position="117"/>
    </location>
</feature>
<feature type="binding site" evidence="1">
    <location>
        <position position="11"/>
    </location>
    <ligand>
        <name>ATP</name>
        <dbReference type="ChEBI" id="CHEBI:30616"/>
    </ligand>
</feature>
<feature type="binding site" evidence="1">
    <location>
        <position position="59"/>
    </location>
    <ligand>
        <name>ATP</name>
        <dbReference type="ChEBI" id="CHEBI:30616"/>
    </ligand>
</feature>
<feature type="binding site" evidence="1">
    <location>
        <position position="87"/>
    </location>
    <ligand>
        <name>ATP</name>
        <dbReference type="ChEBI" id="CHEBI:30616"/>
    </ligand>
</feature>
<feature type="binding site" evidence="1">
    <location>
        <position position="93"/>
    </location>
    <ligand>
        <name>ATP</name>
        <dbReference type="ChEBI" id="CHEBI:30616"/>
    </ligand>
</feature>
<feature type="binding site" evidence="1">
    <location>
        <position position="104"/>
    </location>
    <ligand>
        <name>ATP</name>
        <dbReference type="ChEBI" id="CHEBI:30616"/>
    </ligand>
</feature>
<feature type="binding site" evidence="1">
    <location>
        <position position="114"/>
    </location>
    <ligand>
        <name>ATP</name>
        <dbReference type="ChEBI" id="CHEBI:30616"/>
    </ligand>
</feature>
<comment type="function">
    <text evidence="1">Major role in the synthesis of nucleoside triphosphates other than ATP. The ATP gamma phosphate is transferred to the NDP beta phosphate via a ping-pong mechanism, using a phosphorylated active-site intermediate.</text>
</comment>
<comment type="catalytic activity">
    <reaction evidence="1">
        <text>a 2'-deoxyribonucleoside 5'-diphosphate + ATP = a 2'-deoxyribonucleoside 5'-triphosphate + ADP</text>
        <dbReference type="Rhea" id="RHEA:44640"/>
        <dbReference type="ChEBI" id="CHEBI:30616"/>
        <dbReference type="ChEBI" id="CHEBI:61560"/>
        <dbReference type="ChEBI" id="CHEBI:73316"/>
        <dbReference type="ChEBI" id="CHEBI:456216"/>
        <dbReference type="EC" id="2.7.4.6"/>
    </reaction>
</comment>
<comment type="catalytic activity">
    <reaction evidence="1">
        <text>a ribonucleoside 5'-diphosphate + ATP = a ribonucleoside 5'-triphosphate + ADP</text>
        <dbReference type="Rhea" id="RHEA:18113"/>
        <dbReference type="ChEBI" id="CHEBI:30616"/>
        <dbReference type="ChEBI" id="CHEBI:57930"/>
        <dbReference type="ChEBI" id="CHEBI:61557"/>
        <dbReference type="ChEBI" id="CHEBI:456216"/>
        <dbReference type="EC" id="2.7.4.6"/>
    </reaction>
</comment>
<comment type="cofactor">
    <cofactor evidence="1">
        <name>Mg(2+)</name>
        <dbReference type="ChEBI" id="CHEBI:18420"/>
    </cofactor>
</comment>
<comment type="subunit">
    <text evidence="1">Homotetramer.</text>
</comment>
<comment type="subcellular location">
    <subcellularLocation>
        <location evidence="1">Cytoplasm</location>
    </subcellularLocation>
</comment>
<comment type="similarity">
    <text evidence="1">Belongs to the NDK family.</text>
</comment>
<gene>
    <name evidence="1" type="primary">ndk</name>
    <name type="ordered locus">PST_3035</name>
</gene>
<organism>
    <name type="scientific">Stutzerimonas stutzeri (strain A1501)</name>
    <name type="common">Pseudomonas stutzeri</name>
    <dbReference type="NCBI Taxonomy" id="379731"/>
    <lineage>
        <taxon>Bacteria</taxon>
        <taxon>Pseudomonadati</taxon>
        <taxon>Pseudomonadota</taxon>
        <taxon>Gammaproteobacteria</taxon>
        <taxon>Pseudomonadales</taxon>
        <taxon>Pseudomonadaceae</taxon>
        <taxon>Stutzerimonas</taxon>
    </lineage>
</organism>
<reference key="1">
    <citation type="journal article" date="2008" name="Proc. Natl. Acad. Sci. U.S.A.">
        <title>Nitrogen fixation island and rhizosphere competence traits in the genome of root-associated Pseudomonas stutzeri A1501.</title>
        <authorList>
            <person name="Yan Y."/>
            <person name="Yang J."/>
            <person name="Dou Y."/>
            <person name="Chen M."/>
            <person name="Ping S."/>
            <person name="Peng J."/>
            <person name="Lu W."/>
            <person name="Zhang W."/>
            <person name="Yao Z."/>
            <person name="Li H."/>
            <person name="Liu W."/>
            <person name="He S."/>
            <person name="Geng L."/>
            <person name="Zhang X."/>
            <person name="Yang F."/>
            <person name="Yu H."/>
            <person name="Zhan Y."/>
            <person name="Li D."/>
            <person name="Lin Z."/>
            <person name="Wang Y."/>
            <person name="Elmerich C."/>
            <person name="Lin M."/>
            <person name="Jin Q."/>
        </authorList>
    </citation>
    <scope>NUCLEOTIDE SEQUENCE [LARGE SCALE GENOMIC DNA]</scope>
    <source>
        <strain>A1501</strain>
    </source>
</reference>
<proteinExistence type="inferred from homology"/>